<protein>
    <recommendedName>
        <fullName>Uncharacterized protein MT0099</fullName>
    </recommendedName>
</protein>
<reference key="1">
    <citation type="journal article" date="2002" name="J. Bacteriol.">
        <title>Whole-genome comparison of Mycobacterium tuberculosis clinical and laboratory strains.</title>
        <authorList>
            <person name="Fleischmann R.D."/>
            <person name="Alland D."/>
            <person name="Eisen J.A."/>
            <person name="Carpenter L."/>
            <person name="White O."/>
            <person name="Peterson J.D."/>
            <person name="DeBoy R.T."/>
            <person name="Dodson R.J."/>
            <person name="Gwinn M.L."/>
            <person name="Haft D.H."/>
            <person name="Hickey E.K."/>
            <person name="Kolonay J.F."/>
            <person name="Nelson W.C."/>
            <person name="Umayam L.A."/>
            <person name="Ermolaeva M.D."/>
            <person name="Salzberg S.L."/>
            <person name="Delcher A."/>
            <person name="Utterback T.R."/>
            <person name="Weidman J.F."/>
            <person name="Khouri H.M."/>
            <person name="Gill J."/>
            <person name="Mikula A."/>
            <person name="Bishai W."/>
            <person name="Jacobs W.R. Jr."/>
            <person name="Venter J.C."/>
            <person name="Fraser C.M."/>
        </authorList>
    </citation>
    <scope>NUCLEOTIDE SEQUENCE [LARGE SCALE GENOMIC DNA]</scope>
    <source>
        <strain>CDC 1551 / Oshkosh</strain>
    </source>
</reference>
<name>Y090_MYCTO</name>
<sequence length="256" mass="27838">MAKNQNRIRNRWELITCGLGGHVTYAPDDAALAARLRASTGLGEVWRCLRCGDFALGGPQGRGAPEDAPLIMRGKALRQAIIIRALGVERLVRALVLALAAWAVWEFRGARGAIQATLDRDLPVLRAAGFKVDQMTVIHALEKALAAKPSTLALITGMLAAYAVLQAVEGVGLWLLKRWGEYFAVVATSIFLPLEVHDLAKGITTTRVVTFSINVAAVVYLLISKRLFGVRGGRKAYDVERRGEQLLDLERAAMLT</sequence>
<accession>P9WM70</accession>
<accession>L0T2K3</accession>
<accession>P64683</accession>
<accession>Q10887</accession>
<feature type="chain" id="PRO_0000427355" description="Uncharacterized protein MT0099">
    <location>
        <begin position="1"/>
        <end position="256"/>
    </location>
</feature>
<feature type="transmembrane region" description="Helical" evidence="1">
    <location>
        <begin position="155"/>
        <end position="175"/>
    </location>
</feature>
<feature type="transmembrane region" description="Helical" evidence="1">
    <location>
        <begin position="203"/>
        <end position="223"/>
    </location>
</feature>
<keyword id="KW-1003">Cell membrane</keyword>
<keyword id="KW-0472">Membrane</keyword>
<keyword id="KW-1185">Reference proteome</keyword>
<keyword id="KW-0812">Transmembrane</keyword>
<keyword id="KW-1133">Transmembrane helix</keyword>
<organism>
    <name type="scientific">Mycobacterium tuberculosis (strain CDC 1551 / Oshkosh)</name>
    <dbReference type="NCBI Taxonomy" id="83331"/>
    <lineage>
        <taxon>Bacteria</taxon>
        <taxon>Bacillati</taxon>
        <taxon>Actinomycetota</taxon>
        <taxon>Actinomycetes</taxon>
        <taxon>Mycobacteriales</taxon>
        <taxon>Mycobacteriaceae</taxon>
        <taxon>Mycobacterium</taxon>
        <taxon>Mycobacterium tuberculosis complex</taxon>
    </lineage>
</organism>
<evidence type="ECO:0000255" key="1"/>
<evidence type="ECO:0000305" key="2"/>
<gene>
    <name type="ordered locus">MT0099</name>
</gene>
<proteinExistence type="predicted"/>
<dbReference type="EMBL" id="AE000516">
    <property type="protein sequence ID" value="AAK44321.1"/>
    <property type="molecule type" value="Genomic_DNA"/>
</dbReference>
<dbReference type="PIR" id="B70750">
    <property type="entry name" value="B70750"/>
</dbReference>
<dbReference type="RefSeq" id="WP_003899807.1">
    <property type="nucleotide sequence ID" value="NZ_KK341227.1"/>
</dbReference>
<dbReference type="KEGG" id="mtc:MT0099"/>
<dbReference type="PATRIC" id="fig|83331.31.peg.104"/>
<dbReference type="HOGENOM" id="CLU_093816_0_0_11"/>
<dbReference type="Proteomes" id="UP000001020">
    <property type="component" value="Chromosome"/>
</dbReference>
<dbReference type="GO" id="GO:0005886">
    <property type="term" value="C:plasma membrane"/>
    <property type="evidence" value="ECO:0007669"/>
    <property type="project" value="UniProtKB-SubCell"/>
</dbReference>
<dbReference type="InterPro" id="IPR014511">
    <property type="entry name" value="DUF2068_TM_subgr"/>
</dbReference>
<dbReference type="InterPro" id="IPR021125">
    <property type="entry name" value="DUF2127"/>
</dbReference>
<dbReference type="Pfam" id="PF09900">
    <property type="entry name" value="DUF2127"/>
    <property type="match status" value="1"/>
</dbReference>
<dbReference type="PIRSF" id="PIRSF021485">
    <property type="entry name" value="UCP021485"/>
    <property type="match status" value="1"/>
</dbReference>
<comment type="subcellular location">
    <subcellularLocation>
        <location evidence="2">Cell membrane</location>
        <topology evidence="2">Multi-pass membrane protein</topology>
    </subcellularLocation>
</comment>